<gene>
    <name evidence="1" type="primary">trpA</name>
    <name type="ordered locus">RL0022</name>
</gene>
<keyword id="KW-0028">Amino-acid biosynthesis</keyword>
<keyword id="KW-0057">Aromatic amino acid biosynthesis</keyword>
<keyword id="KW-0456">Lyase</keyword>
<keyword id="KW-0822">Tryptophan biosynthesis</keyword>
<comment type="function">
    <text evidence="1">The alpha subunit is responsible for the aldol cleavage of indoleglycerol phosphate to indole and glyceraldehyde 3-phosphate.</text>
</comment>
<comment type="catalytic activity">
    <reaction evidence="1">
        <text>(1S,2R)-1-C-(indol-3-yl)glycerol 3-phosphate + L-serine = D-glyceraldehyde 3-phosphate + L-tryptophan + H2O</text>
        <dbReference type="Rhea" id="RHEA:10532"/>
        <dbReference type="ChEBI" id="CHEBI:15377"/>
        <dbReference type="ChEBI" id="CHEBI:33384"/>
        <dbReference type="ChEBI" id="CHEBI:57912"/>
        <dbReference type="ChEBI" id="CHEBI:58866"/>
        <dbReference type="ChEBI" id="CHEBI:59776"/>
        <dbReference type="EC" id="4.2.1.20"/>
    </reaction>
</comment>
<comment type="pathway">
    <text evidence="1">Amino-acid biosynthesis; L-tryptophan biosynthesis; L-tryptophan from chorismate: step 5/5.</text>
</comment>
<comment type="subunit">
    <text evidence="1">Tetramer of two alpha and two beta chains.</text>
</comment>
<comment type="similarity">
    <text evidence="1">Belongs to the TrpA family.</text>
</comment>
<evidence type="ECO:0000255" key="1">
    <source>
        <dbReference type="HAMAP-Rule" id="MF_00131"/>
    </source>
</evidence>
<accession>Q1MND5</accession>
<dbReference type="EC" id="4.2.1.20" evidence="1"/>
<dbReference type="EMBL" id="AM236080">
    <property type="protein sequence ID" value="CAK05510.1"/>
    <property type="molecule type" value="Genomic_DNA"/>
</dbReference>
<dbReference type="RefSeq" id="WP_011649852.1">
    <property type="nucleotide sequence ID" value="NC_008380.1"/>
</dbReference>
<dbReference type="SMR" id="Q1MND5"/>
<dbReference type="EnsemblBacteria" id="CAK05510">
    <property type="protein sequence ID" value="CAK05510"/>
    <property type="gene ID" value="RL0022"/>
</dbReference>
<dbReference type="KEGG" id="rle:RL0022"/>
<dbReference type="eggNOG" id="COG0159">
    <property type="taxonomic scope" value="Bacteria"/>
</dbReference>
<dbReference type="HOGENOM" id="CLU_016734_0_0_5"/>
<dbReference type="UniPathway" id="UPA00035">
    <property type="reaction ID" value="UER00044"/>
</dbReference>
<dbReference type="Proteomes" id="UP000006575">
    <property type="component" value="Chromosome"/>
</dbReference>
<dbReference type="GO" id="GO:0005829">
    <property type="term" value="C:cytosol"/>
    <property type="evidence" value="ECO:0007669"/>
    <property type="project" value="TreeGrafter"/>
</dbReference>
<dbReference type="GO" id="GO:0004834">
    <property type="term" value="F:tryptophan synthase activity"/>
    <property type="evidence" value="ECO:0007669"/>
    <property type="project" value="UniProtKB-UniRule"/>
</dbReference>
<dbReference type="CDD" id="cd04724">
    <property type="entry name" value="Tryptophan_synthase_alpha"/>
    <property type="match status" value="1"/>
</dbReference>
<dbReference type="FunFam" id="3.20.20.70:FF:000037">
    <property type="entry name" value="Tryptophan synthase alpha chain"/>
    <property type="match status" value="1"/>
</dbReference>
<dbReference type="Gene3D" id="3.20.20.70">
    <property type="entry name" value="Aldolase class I"/>
    <property type="match status" value="1"/>
</dbReference>
<dbReference type="HAMAP" id="MF_00131">
    <property type="entry name" value="Trp_synth_alpha"/>
    <property type="match status" value="1"/>
</dbReference>
<dbReference type="InterPro" id="IPR013785">
    <property type="entry name" value="Aldolase_TIM"/>
</dbReference>
<dbReference type="InterPro" id="IPR011060">
    <property type="entry name" value="RibuloseP-bd_barrel"/>
</dbReference>
<dbReference type="InterPro" id="IPR018204">
    <property type="entry name" value="Trp_synthase_alpha_AS"/>
</dbReference>
<dbReference type="InterPro" id="IPR002028">
    <property type="entry name" value="Trp_synthase_suA"/>
</dbReference>
<dbReference type="NCBIfam" id="TIGR00262">
    <property type="entry name" value="trpA"/>
    <property type="match status" value="1"/>
</dbReference>
<dbReference type="PANTHER" id="PTHR43406:SF1">
    <property type="entry name" value="TRYPTOPHAN SYNTHASE ALPHA CHAIN, CHLOROPLASTIC"/>
    <property type="match status" value="1"/>
</dbReference>
<dbReference type="PANTHER" id="PTHR43406">
    <property type="entry name" value="TRYPTOPHAN SYNTHASE, ALPHA CHAIN"/>
    <property type="match status" value="1"/>
</dbReference>
<dbReference type="Pfam" id="PF00290">
    <property type="entry name" value="Trp_syntA"/>
    <property type="match status" value="1"/>
</dbReference>
<dbReference type="SUPFAM" id="SSF51366">
    <property type="entry name" value="Ribulose-phoshate binding barrel"/>
    <property type="match status" value="1"/>
</dbReference>
<dbReference type="PROSITE" id="PS00167">
    <property type="entry name" value="TRP_SYNTHASE_ALPHA"/>
    <property type="match status" value="1"/>
</dbReference>
<protein>
    <recommendedName>
        <fullName evidence="1">Tryptophan synthase alpha chain</fullName>
        <ecNumber evidence="1">4.2.1.20</ecNumber>
    </recommendedName>
</protein>
<sequence length="279" mass="29557">MTARMDKRFAELKAEGRPALVTYFMGGDPDYDTSLGIMKALPEAGSDIIELGMPFSDPMADGPAIQLAGQRALKGGQTLKKTLQLAADFRKTNDATPIVMMGYYNPIYIYGVEKFLDDALLAGIDGLIVVDLPPEMDDELCIPAIRKGINFIRLATPTTDEKRLPKVLKNTSGFVYYVSMNGITGSALPDPSLVSGAVERIKQHTKLPVCVGFGVKTAEHAKVIGGSADGVVVGTAIVNQVATSLTHDGKATADTVQAVATLVRGLSTGTRSARLVAAE</sequence>
<proteinExistence type="inferred from homology"/>
<name>TRPA_RHIJ3</name>
<feature type="chain" id="PRO_1000018266" description="Tryptophan synthase alpha chain">
    <location>
        <begin position="1"/>
        <end position="279"/>
    </location>
</feature>
<feature type="active site" description="Proton acceptor" evidence="1">
    <location>
        <position position="50"/>
    </location>
</feature>
<feature type="active site" description="Proton acceptor" evidence="1">
    <location>
        <position position="61"/>
    </location>
</feature>
<reference key="1">
    <citation type="journal article" date="2006" name="Genome Biol.">
        <title>The genome of Rhizobium leguminosarum has recognizable core and accessory components.</title>
        <authorList>
            <person name="Young J.P.W."/>
            <person name="Crossman L.C."/>
            <person name="Johnston A.W.B."/>
            <person name="Thomson N.R."/>
            <person name="Ghazoui Z.F."/>
            <person name="Hull K.H."/>
            <person name="Wexler M."/>
            <person name="Curson A.R.J."/>
            <person name="Todd J.D."/>
            <person name="Poole P.S."/>
            <person name="Mauchline T.H."/>
            <person name="East A.K."/>
            <person name="Quail M.A."/>
            <person name="Churcher C."/>
            <person name="Arrowsmith C."/>
            <person name="Cherevach I."/>
            <person name="Chillingworth T."/>
            <person name="Clarke K."/>
            <person name="Cronin A."/>
            <person name="Davis P."/>
            <person name="Fraser A."/>
            <person name="Hance Z."/>
            <person name="Hauser H."/>
            <person name="Jagels K."/>
            <person name="Moule S."/>
            <person name="Mungall K."/>
            <person name="Norbertczak H."/>
            <person name="Rabbinowitsch E."/>
            <person name="Sanders M."/>
            <person name="Simmonds M."/>
            <person name="Whitehead S."/>
            <person name="Parkhill J."/>
        </authorList>
    </citation>
    <scope>NUCLEOTIDE SEQUENCE [LARGE SCALE GENOMIC DNA]</scope>
    <source>
        <strain>DSM 114642 / LMG 32736 / 3841</strain>
    </source>
</reference>
<organism>
    <name type="scientific">Rhizobium johnstonii (strain DSM 114642 / LMG 32736 / 3841)</name>
    <name type="common">Rhizobium leguminosarum bv. viciae</name>
    <dbReference type="NCBI Taxonomy" id="216596"/>
    <lineage>
        <taxon>Bacteria</taxon>
        <taxon>Pseudomonadati</taxon>
        <taxon>Pseudomonadota</taxon>
        <taxon>Alphaproteobacteria</taxon>
        <taxon>Hyphomicrobiales</taxon>
        <taxon>Rhizobiaceae</taxon>
        <taxon>Rhizobium/Agrobacterium group</taxon>
        <taxon>Rhizobium</taxon>
        <taxon>Rhizobium johnstonii</taxon>
    </lineage>
</organism>